<comment type="function">
    <text evidence="1">Catalyzes the formation of 6,7-dimethyl-8-ribityllumazine by condensation of 5-amino-6-(D-ribitylamino)uracil with 3,4-dihydroxy-2-butanone 4-phosphate. This is the penultimate step in the biosynthesis of riboflavin.</text>
</comment>
<comment type="catalytic activity">
    <reaction evidence="1">
        <text>(2S)-2-hydroxy-3-oxobutyl phosphate + 5-amino-6-(D-ribitylamino)uracil = 6,7-dimethyl-8-(1-D-ribityl)lumazine + phosphate + 2 H2O + H(+)</text>
        <dbReference type="Rhea" id="RHEA:26152"/>
        <dbReference type="ChEBI" id="CHEBI:15377"/>
        <dbReference type="ChEBI" id="CHEBI:15378"/>
        <dbReference type="ChEBI" id="CHEBI:15934"/>
        <dbReference type="ChEBI" id="CHEBI:43474"/>
        <dbReference type="ChEBI" id="CHEBI:58201"/>
        <dbReference type="ChEBI" id="CHEBI:58830"/>
        <dbReference type="EC" id="2.5.1.78"/>
    </reaction>
</comment>
<comment type="pathway">
    <text evidence="1">Cofactor biosynthesis; riboflavin biosynthesis; riboflavin from 2-hydroxy-3-oxobutyl phosphate and 5-amino-6-(D-ribitylamino)uracil: step 1/2.</text>
</comment>
<comment type="interaction">
    <interactant intactId="EBI-10065097">
        <id>P61940</id>
    </interactant>
    <interactant intactId="EBI-10069661">
        <id>Q72CT3</id>
        <label>ribE</label>
    </interactant>
    <organismsDiffer>false</organismsDiffer>
    <experiments>2</experiments>
</comment>
<comment type="similarity">
    <text evidence="1">Belongs to the DMRL synthase family.</text>
</comment>
<keyword id="KW-1185">Reference proteome</keyword>
<keyword id="KW-0686">Riboflavin biosynthesis</keyword>
<keyword id="KW-0808">Transferase</keyword>
<protein>
    <recommendedName>
        <fullName evidence="1">6,7-dimethyl-8-ribityllumazine synthase</fullName>
        <shortName evidence="1">DMRL synthase</shortName>
        <shortName evidence="1">LS</shortName>
        <shortName evidence="1">Lumazine synthase</shortName>
        <ecNumber evidence="1">2.5.1.78</ecNumber>
    </recommendedName>
</protein>
<evidence type="ECO:0000255" key="1">
    <source>
        <dbReference type="HAMAP-Rule" id="MF_00178"/>
    </source>
</evidence>
<organism>
    <name type="scientific">Nitratidesulfovibrio vulgaris (strain ATCC 29579 / DSM 644 / CCUG 34227 / NCIMB 8303 / VKM B-1760 / Hildenborough)</name>
    <name type="common">Desulfovibrio vulgaris</name>
    <dbReference type="NCBI Taxonomy" id="882"/>
    <lineage>
        <taxon>Bacteria</taxon>
        <taxon>Pseudomonadati</taxon>
        <taxon>Thermodesulfobacteriota</taxon>
        <taxon>Desulfovibrionia</taxon>
        <taxon>Desulfovibrionales</taxon>
        <taxon>Desulfovibrionaceae</taxon>
        <taxon>Nitratidesulfovibrio</taxon>
    </lineage>
</organism>
<dbReference type="EC" id="2.5.1.78" evidence="1"/>
<dbReference type="EMBL" id="AE017285">
    <property type="protein sequence ID" value="AAS95676.1"/>
    <property type="molecule type" value="Genomic_DNA"/>
</dbReference>
<dbReference type="RefSeq" id="WP_010938494.1">
    <property type="nucleotide sequence ID" value="NC_002937.3"/>
</dbReference>
<dbReference type="RefSeq" id="YP_010417.1">
    <property type="nucleotide sequence ID" value="NC_002937.3"/>
</dbReference>
<dbReference type="SMR" id="P61940"/>
<dbReference type="IntAct" id="P61940">
    <property type="interactions" value="3"/>
</dbReference>
<dbReference type="STRING" id="882.DVU_1198"/>
<dbReference type="PaxDb" id="882-DVU_1198"/>
<dbReference type="EnsemblBacteria" id="AAS95676">
    <property type="protein sequence ID" value="AAS95676"/>
    <property type="gene ID" value="DVU_1198"/>
</dbReference>
<dbReference type="KEGG" id="dvu:DVU_1198"/>
<dbReference type="PATRIC" id="fig|882.5.peg.1122"/>
<dbReference type="eggNOG" id="COG0054">
    <property type="taxonomic scope" value="Bacteria"/>
</dbReference>
<dbReference type="HOGENOM" id="CLU_089358_1_1_7"/>
<dbReference type="OrthoDB" id="9809709at2"/>
<dbReference type="PhylomeDB" id="P61940"/>
<dbReference type="UniPathway" id="UPA00275">
    <property type="reaction ID" value="UER00404"/>
</dbReference>
<dbReference type="Proteomes" id="UP000002194">
    <property type="component" value="Chromosome"/>
</dbReference>
<dbReference type="GO" id="GO:0005829">
    <property type="term" value="C:cytosol"/>
    <property type="evidence" value="ECO:0007669"/>
    <property type="project" value="TreeGrafter"/>
</dbReference>
<dbReference type="GO" id="GO:0009349">
    <property type="term" value="C:riboflavin synthase complex"/>
    <property type="evidence" value="ECO:0007669"/>
    <property type="project" value="InterPro"/>
</dbReference>
<dbReference type="GO" id="GO:0000906">
    <property type="term" value="F:6,7-dimethyl-8-ribityllumazine synthase activity"/>
    <property type="evidence" value="ECO:0007669"/>
    <property type="project" value="UniProtKB-UniRule"/>
</dbReference>
<dbReference type="GO" id="GO:0009231">
    <property type="term" value="P:riboflavin biosynthetic process"/>
    <property type="evidence" value="ECO:0007669"/>
    <property type="project" value="UniProtKB-UniRule"/>
</dbReference>
<dbReference type="CDD" id="cd09209">
    <property type="entry name" value="Lumazine_synthase-I"/>
    <property type="match status" value="1"/>
</dbReference>
<dbReference type="FunFam" id="3.40.50.960:FF:000001">
    <property type="entry name" value="6,7-dimethyl-8-ribityllumazine synthase"/>
    <property type="match status" value="1"/>
</dbReference>
<dbReference type="Gene3D" id="3.40.50.960">
    <property type="entry name" value="Lumazine/riboflavin synthase"/>
    <property type="match status" value="1"/>
</dbReference>
<dbReference type="HAMAP" id="MF_00178">
    <property type="entry name" value="Lumazine_synth"/>
    <property type="match status" value="1"/>
</dbReference>
<dbReference type="InterPro" id="IPR034964">
    <property type="entry name" value="LS"/>
</dbReference>
<dbReference type="InterPro" id="IPR002180">
    <property type="entry name" value="LS/RS"/>
</dbReference>
<dbReference type="InterPro" id="IPR036467">
    <property type="entry name" value="LS/RS_sf"/>
</dbReference>
<dbReference type="NCBIfam" id="TIGR00114">
    <property type="entry name" value="lumazine-synth"/>
    <property type="match status" value="1"/>
</dbReference>
<dbReference type="NCBIfam" id="NF000812">
    <property type="entry name" value="PRK00061.1-4"/>
    <property type="match status" value="1"/>
</dbReference>
<dbReference type="PANTHER" id="PTHR21058:SF0">
    <property type="entry name" value="6,7-DIMETHYL-8-RIBITYLLUMAZINE SYNTHASE"/>
    <property type="match status" value="1"/>
</dbReference>
<dbReference type="PANTHER" id="PTHR21058">
    <property type="entry name" value="6,7-DIMETHYL-8-RIBITYLLUMAZINE SYNTHASE DMRL SYNTHASE LUMAZINE SYNTHASE"/>
    <property type="match status" value="1"/>
</dbReference>
<dbReference type="Pfam" id="PF00885">
    <property type="entry name" value="DMRL_synthase"/>
    <property type="match status" value="1"/>
</dbReference>
<dbReference type="SUPFAM" id="SSF52121">
    <property type="entry name" value="Lumazine synthase"/>
    <property type="match status" value="1"/>
</dbReference>
<feature type="chain" id="PRO_0000134753" description="6,7-dimethyl-8-ribityllumazine synthase">
    <location>
        <begin position="1"/>
        <end position="156"/>
    </location>
</feature>
<feature type="active site" description="Proton donor" evidence="1">
    <location>
        <position position="91"/>
    </location>
</feature>
<feature type="binding site" evidence="1">
    <location>
        <position position="25"/>
    </location>
    <ligand>
        <name>5-amino-6-(D-ribitylamino)uracil</name>
        <dbReference type="ChEBI" id="CHEBI:15934"/>
    </ligand>
</feature>
<feature type="binding site" evidence="1">
    <location>
        <begin position="59"/>
        <end position="61"/>
    </location>
    <ligand>
        <name>5-amino-6-(D-ribitylamino)uracil</name>
        <dbReference type="ChEBI" id="CHEBI:15934"/>
    </ligand>
</feature>
<feature type="binding site" evidence="1">
    <location>
        <begin position="83"/>
        <end position="85"/>
    </location>
    <ligand>
        <name>5-amino-6-(D-ribitylamino)uracil</name>
        <dbReference type="ChEBI" id="CHEBI:15934"/>
    </ligand>
</feature>
<feature type="binding site" evidence="1">
    <location>
        <begin position="88"/>
        <end position="89"/>
    </location>
    <ligand>
        <name>(2S)-2-hydroxy-3-oxobutyl phosphate</name>
        <dbReference type="ChEBI" id="CHEBI:58830"/>
    </ligand>
</feature>
<feature type="binding site" evidence="1">
    <location>
        <position position="116"/>
    </location>
    <ligand>
        <name>5-amino-6-(D-ribitylamino)uracil</name>
        <dbReference type="ChEBI" id="CHEBI:15934"/>
    </ligand>
</feature>
<feature type="binding site" evidence="1">
    <location>
        <position position="130"/>
    </location>
    <ligand>
        <name>(2S)-2-hydroxy-3-oxobutyl phosphate</name>
        <dbReference type="ChEBI" id="CHEBI:58830"/>
    </ligand>
</feature>
<gene>
    <name evidence="1" type="primary">ribH</name>
    <name type="ordered locus">DVU_1198</name>
</gene>
<sequence>MLHIKTIEGQLDAKGLKFAIVATRFNDFIVDRLIGGACDYLQRHGCDRENLTIVRIPGAFEMPLVAKKLAHSGKYDGIIALGAVIRGATPHFDFVSNEASKGLAQACLESGVPLGFGLLTTDNIEQAIERAGSKAGNKGAEAAAAVLETVRVMEQL</sequence>
<accession>P61940</accession>
<name>RISB_NITV2</name>
<proteinExistence type="evidence at protein level"/>
<reference key="1">
    <citation type="journal article" date="2004" name="Nat. Biotechnol.">
        <title>The genome sequence of the anaerobic, sulfate-reducing bacterium Desulfovibrio vulgaris Hildenborough.</title>
        <authorList>
            <person name="Heidelberg J.F."/>
            <person name="Seshadri R."/>
            <person name="Haveman S.A."/>
            <person name="Hemme C.L."/>
            <person name="Paulsen I.T."/>
            <person name="Kolonay J.F."/>
            <person name="Eisen J.A."/>
            <person name="Ward N.L."/>
            <person name="Methe B.A."/>
            <person name="Brinkac L.M."/>
            <person name="Daugherty S.C."/>
            <person name="DeBoy R.T."/>
            <person name="Dodson R.J."/>
            <person name="Durkin A.S."/>
            <person name="Madupu R."/>
            <person name="Nelson W.C."/>
            <person name="Sullivan S.A."/>
            <person name="Fouts D.E."/>
            <person name="Haft D.H."/>
            <person name="Selengut J."/>
            <person name="Peterson J.D."/>
            <person name="Davidsen T.M."/>
            <person name="Zafar N."/>
            <person name="Zhou L."/>
            <person name="Radune D."/>
            <person name="Dimitrov G."/>
            <person name="Hance M."/>
            <person name="Tran K."/>
            <person name="Khouri H.M."/>
            <person name="Gill J."/>
            <person name="Utterback T.R."/>
            <person name="Feldblyum T.V."/>
            <person name="Wall J.D."/>
            <person name="Voordouw G."/>
            <person name="Fraser C.M."/>
        </authorList>
    </citation>
    <scope>NUCLEOTIDE SEQUENCE [LARGE SCALE GENOMIC DNA]</scope>
    <source>
        <strain>ATCC 29579 / DSM 644 / CCUG 34227 / NCIMB 8303 / VKM B-1760 / Hildenborough</strain>
    </source>
</reference>